<proteinExistence type="inferred from homology"/>
<comment type="function">
    <text evidence="1">F(1)F(0) ATP synthase produces ATP from ADP in the presence of a proton or sodium gradient. F-type ATPases consist of two structural domains, F(1) containing the extramembraneous catalytic core and F(0) containing the membrane proton channel, linked together by a central stalk and a peripheral stalk. During catalysis, ATP synthesis in the catalytic domain of F(1) is coupled via a rotary mechanism of the central stalk subunits to proton translocation.</text>
</comment>
<comment type="function">
    <text evidence="1">Key component of the F(0) channel; it plays a direct role in translocation across the membrane. A homomeric c-ring of between 10-14 subunits forms the central stalk rotor element with the F(1) delta and epsilon subunits.</text>
</comment>
<comment type="subunit">
    <text evidence="1">F-type ATPases have 2 components, F(1) - the catalytic core - and F(0) - the membrane proton channel. F(1) has five subunits: alpha(3), beta(3), gamma(1), delta(1), epsilon(1). F(0) has four main subunits: a(1), b(1), b'(1) and c(10-14). The alpha and beta chains form an alternating ring which encloses part of the gamma chain. F(1) is attached to F(0) by a central stalk formed by the gamma and epsilon chains, while a peripheral stalk is formed by the delta, b and b' chains.</text>
</comment>
<comment type="subcellular location">
    <subcellularLocation>
        <location evidence="1">Plastid</location>
        <location evidence="1">Chloroplast thylakoid membrane</location>
        <topology evidence="1">Multi-pass membrane protein</topology>
    </subcellularLocation>
</comment>
<comment type="miscellaneous">
    <text>In plastids the F-type ATPase is also known as CF(1)CF(0).</text>
</comment>
<comment type="similarity">
    <text evidence="1">Belongs to the ATPase C chain family.</text>
</comment>
<name>ATPH_SOLBU</name>
<protein>
    <recommendedName>
        <fullName evidence="1">ATP synthase subunit c, chloroplastic</fullName>
    </recommendedName>
    <alternativeName>
        <fullName evidence="1">ATP synthase F(0) sector subunit c</fullName>
    </alternativeName>
    <alternativeName>
        <fullName evidence="1">ATPase subunit III</fullName>
    </alternativeName>
    <alternativeName>
        <fullName evidence="1">F-type ATPase subunit c</fullName>
        <shortName evidence="1">F-ATPase subunit c</shortName>
    </alternativeName>
    <alternativeName>
        <fullName evidence="1">Lipid-binding protein</fullName>
    </alternativeName>
</protein>
<sequence>MNPLIAAASVIAAGLAVGLASIGPGVGQGTAAGQAVEGIARQPEAEGKIRGTLLLSLAFMEALTIYGLVVALALLFANPFV</sequence>
<reference key="1">
    <citation type="journal article" date="2006" name="Theor. Appl. Genet.">
        <title>Complete chloroplast genome sequences of Solanum bulbocastanum, Solanum lycopersicum and comparative analyses with other Solanaceae genomes.</title>
        <authorList>
            <person name="Daniell H."/>
            <person name="Lee S.-B."/>
            <person name="Grevich J."/>
            <person name="Saski C."/>
            <person name="Quesada-Vargas T."/>
            <person name="Guda C."/>
            <person name="Tomkins J."/>
            <person name="Jansen R.K."/>
        </authorList>
    </citation>
    <scope>NUCLEOTIDE SEQUENCE [LARGE SCALE GENOMIC DNA]</scope>
    <source>
        <strain>cv. PT29</strain>
    </source>
</reference>
<geneLocation type="chloroplast"/>
<feature type="chain" id="PRO_0000362962" description="ATP synthase subunit c, chloroplastic">
    <location>
        <begin position="1"/>
        <end position="81"/>
    </location>
</feature>
<feature type="transmembrane region" description="Helical" evidence="1">
    <location>
        <begin position="3"/>
        <end position="23"/>
    </location>
</feature>
<feature type="transmembrane region" description="Helical" evidence="1">
    <location>
        <begin position="57"/>
        <end position="77"/>
    </location>
</feature>
<feature type="site" description="Reversibly protonated during proton transport" evidence="1">
    <location>
        <position position="61"/>
    </location>
</feature>
<keyword id="KW-0066">ATP synthesis</keyword>
<keyword id="KW-0138">CF(0)</keyword>
<keyword id="KW-0150">Chloroplast</keyword>
<keyword id="KW-0375">Hydrogen ion transport</keyword>
<keyword id="KW-0406">Ion transport</keyword>
<keyword id="KW-0446">Lipid-binding</keyword>
<keyword id="KW-0472">Membrane</keyword>
<keyword id="KW-0934">Plastid</keyword>
<keyword id="KW-0793">Thylakoid</keyword>
<keyword id="KW-0812">Transmembrane</keyword>
<keyword id="KW-1133">Transmembrane helix</keyword>
<keyword id="KW-0813">Transport</keyword>
<organism>
    <name type="scientific">Solanum bulbocastanum</name>
    <name type="common">Wild potato</name>
    <dbReference type="NCBI Taxonomy" id="147425"/>
    <lineage>
        <taxon>Eukaryota</taxon>
        <taxon>Viridiplantae</taxon>
        <taxon>Streptophyta</taxon>
        <taxon>Embryophyta</taxon>
        <taxon>Tracheophyta</taxon>
        <taxon>Spermatophyta</taxon>
        <taxon>Magnoliopsida</taxon>
        <taxon>eudicotyledons</taxon>
        <taxon>Gunneridae</taxon>
        <taxon>Pentapetalae</taxon>
        <taxon>asterids</taxon>
        <taxon>lamiids</taxon>
        <taxon>Solanales</taxon>
        <taxon>Solanaceae</taxon>
        <taxon>Solanoideae</taxon>
        <taxon>Solaneae</taxon>
        <taxon>Solanum</taxon>
    </lineage>
</organism>
<evidence type="ECO:0000255" key="1">
    <source>
        <dbReference type="HAMAP-Rule" id="MF_01396"/>
    </source>
</evidence>
<dbReference type="EMBL" id="DQ347958">
    <property type="protein sequence ID" value="ABC56200.1"/>
    <property type="molecule type" value="Genomic_DNA"/>
</dbReference>
<dbReference type="RefSeq" id="YP_538835.1">
    <property type="nucleotide sequence ID" value="NC_007943.1"/>
</dbReference>
<dbReference type="SMR" id="Q2MIK0"/>
<dbReference type="GeneID" id="3989417"/>
<dbReference type="GO" id="GO:0009535">
    <property type="term" value="C:chloroplast thylakoid membrane"/>
    <property type="evidence" value="ECO:0007669"/>
    <property type="project" value="UniProtKB-SubCell"/>
</dbReference>
<dbReference type="GO" id="GO:0045259">
    <property type="term" value="C:proton-transporting ATP synthase complex"/>
    <property type="evidence" value="ECO:0007669"/>
    <property type="project" value="UniProtKB-KW"/>
</dbReference>
<dbReference type="GO" id="GO:0033177">
    <property type="term" value="C:proton-transporting two-sector ATPase complex, proton-transporting domain"/>
    <property type="evidence" value="ECO:0007669"/>
    <property type="project" value="InterPro"/>
</dbReference>
<dbReference type="GO" id="GO:0008289">
    <property type="term" value="F:lipid binding"/>
    <property type="evidence" value="ECO:0007669"/>
    <property type="project" value="UniProtKB-KW"/>
</dbReference>
<dbReference type="GO" id="GO:0046933">
    <property type="term" value="F:proton-transporting ATP synthase activity, rotational mechanism"/>
    <property type="evidence" value="ECO:0007669"/>
    <property type="project" value="UniProtKB-UniRule"/>
</dbReference>
<dbReference type="CDD" id="cd18183">
    <property type="entry name" value="ATP-synt_Fo_c_ATPH"/>
    <property type="match status" value="1"/>
</dbReference>
<dbReference type="FunFam" id="1.20.20.10:FF:000001">
    <property type="entry name" value="ATP synthase subunit c, chloroplastic"/>
    <property type="match status" value="1"/>
</dbReference>
<dbReference type="Gene3D" id="1.20.20.10">
    <property type="entry name" value="F1F0 ATP synthase subunit C"/>
    <property type="match status" value="1"/>
</dbReference>
<dbReference type="HAMAP" id="MF_01396">
    <property type="entry name" value="ATP_synth_c_bact"/>
    <property type="match status" value="1"/>
</dbReference>
<dbReference type="InterPro" id="IPR005953">
    <property type="entry name" value="ATP_synth_csu_bac/chlpt"/>
</dbReference>
<dbReference type="InterPro" id="IPR000454">
    <property type="entry name" value="ATP_synth_F0_csu"/>
</dbReference>
<dbReference type="InterPro" id="IPR020537">
    <property type="entry name" value="ATP_synth_F0_csu_DDCD_BS"/>
</dbReference>
<dbReference type="InterPro" id="IPR038662">
    <property type="entry name" value="ATP_synth_F0_csu_sf"/>
</dbReference>
<dbReference type="InterPro" id="IPR002379">
    <property type="entry name" value="ATPase_proteolipid_c-like_dom"/>
</dbReference>
<dbReference type="InterPro" id="IPR035921">
    <property type="entry name" value="F/V-ATP_Csub_sf"/>
</dbReference>
<dbReference type="NCBIfam" id="TIGR01260">
    <property type="entry name" value="ATP_synt_c"/>
    <property type="match status" value="1"/>
</dbReference>
<dbReference type="NCBIfam" id="NF005608">
    <property type="entry name" value="PRK07354.1"/>
    <property type="match status" value="1"/>
</dbReference>
<dbReference type="PANTHER" id="PTHR10031">
    <property type="entry name" value="ATP SYNTHASE LIPID-BINDING PROTEIN, MITOCHONDRIAL"/>
    <property type="match status" value="1"/>
</dbReference>
<dbReference type="PANTHER" id="PTHR10031:SF0">
    <property type="entry name" value="ATPASE PROTEIN 9"/>
    <property type="match status" value="1"/>
</dbReference>
<dbReference type="Pfam" id="PF00137">
    <property type="entry name" value="ATP-synt_C"/>
    <property type="match status" value="1"/>
</dbReference>
<dbReference type="PRINTS" id="PR00124">
    <property type="entry name" value="ATPASEC"/>
</dbReference>
<dbReference type="SUPFAM" id="SSF81333">
    <property type="entry name" value="F1F0 ATP synthase subunit C"/>
    <property type="match status" value="1"/>
</dbReference>
<dbReference type="PROSITE" id="PS00605">
    <property type="entry name" value="ATPASE_C"/>
    <property type="match status" value="1"/>
</dbReference>
<accession>Q2MIK0</accession>
<gene>
    <name evidence="1" type="primary">atpH</name>
</gene>